<sequence length="350" mass="37367">MAQQAPDREKALELALAQIDKNFGKGSVMRLGEEVRQPIAVIPTGSIALDVALGIGGLPRGRVVEIYGPESSGKTTVALHAVANAQAAGGIAAFIDAEHALDPDYAQKLGVDTDALLVSQPDTGEQALEIADMLIRSGALDILVIDSVAALVPRAEIEGEMGDSHVGLQARLMSQALRKMTGALNNSGTTAIFINQLREKIGVMFGSPETTTGGKALKFYASVRMDVRRIETLKDGTDAVGNRTRVKVVKNKVSPPFKQAEFDILYGKGISREGSLIDMGVEHGFIRKSGSWFTYDGEQLGQGKENARNFLLQNVDVANEIEKKIKEKLGIGAQLTDDANDDALPAPVDF</sequence>
<feature type="chain" id="PRO_1000047949" description="Protein RecA">
    <location>
        <begin position="1"/>
        <end position="350"/>
    </location>
</feature>
<feature type="binding site" evidence="1">
    <location>
        <begin position="68"/>
        <end position="75"/>
    </location>
    <ligand>
        <name>ATP</name>
        <dbReference type="ChEBI" id="CHEBI:30616"/>
    </ligand>
</feature>
<name>RECA_MYCVP</name>
<keyword id="KW-0067">ATP-binding</keyword>
<keyword id="KW-0963">Cytoplasm</keyword>
<keyword id="KW-0227">DNA damage</keyword>
<keyword id="KW-0233">DNA recombination</keyword>
<keyword id="KW-0234">DNA repair</keyword>
<keyword id="KW-0238">DNA-binding</keyword>
<keyword id="KW-0547">Nucleotide-binding</keyword>
<keyword id="KW-0742">SOS response</keyword>
<proteinExistence type="inferred from homology"/>
<reference key="1">
    <citation type="submission" date="2006-12" db="EMBL/GenBank/DDBJ databases">
        <title>Complete sequence of Mycobacterium vanbaalenii PYR-1.</title>
        <authorList>
            <consortium name="US DOE Joint Genome Institute"/>
            <person name="Copeland A."/>
            <person name="Lucas S."/>
            <person name="Lapidus A."/>
            <person name="Barry K."/>
            <person name="Detter J.C."/>
            <person name="Glavina del Rio T."/>
            <person name="Hammon N."/>
            <person name="Israni S."/>
            <person name="Dalin E."/>
            <person name="Tice H."/>
            <person name="Pitluck S."/>
            <person name="Singan V."/>
            <person name="Schmutz J."/>
            <person name="Larimer F."/>
            <person name="Land M."/>
            <person name="Hauser L."/>
            <person name="Kyrpides N."/>
            <person name="Anderson I.J."/>
            <person name="Miller C."/>
            <person name="Richardson P."/>
        </authorList>
    </citation>
    <scope>NUCLEOTIDE SEQUENCE [LARGE SCALE GENOMIC DNA]</scope>
    <source>
        <strain>DSM 7251 / JCM 13017 / BCRC 16820 / KCTC 9966 / NRRL B-24157 / PYR-1</strain>
    </source>
</reference>
<organism>
    <name type="scientific">Mycolicibacterium vanbaalenii (strain DSM 7251 / JCM 13017 / BCRC 16820 / KCTC 9966 / NRRL B-24157 / PYR-1)</name>
    <name type="common">Mycobacterium vanbaalenii</name>
    <dbReference type="NCBI Taxonomy" id="350058"/>
    <lineage>
        <taxon>Bacteria</taxon>
        <taxon>Bacillati</taxon>
        <taxon>Actinomycetota</taxon>
        <taxon>Actinomycetes</taxon>
        <taxon>Mycobacteriales</taxon>
        <taxon>Mycobacteriaceae</taxon>
        <taxon>Mycolicibacterium</taxon>
    </lineage>
</organism>
<protein>
    <recommendedName>
        <fullName evidence="1">Protein RecA</fullName>
    </recommendedName>
    <alternativeName>
        <fullName evidence="1">Recombinase A</fullName>
    </alternativeName>
</protein>
<dbReference type="EMBL" id="CP000511">
    <property type="protein sequence ID" value="ABM13233.1"/>
    <property type="molecule type" value="Genomic_DNA"/>
</dbReference>
<dbReference type="RefSeq" id="WP_011779645.1">
    <property type="nucleotide sequence ID" value="NZ_JACKSD010000041.1"/>
</dbReference>
<dbReference type="SMR" id="A1T7T3"/>
<dbReference type="STRING" id="350058.Mvan_2420"/>
<dbReference type="KEGG" id="mva:Mvan_2420"/>
<dbReference type="eggNOG" id="COG0468">
    <property type="taxonomic scope" value="Bacteria"/>
</dbReference>
<dbReference type="HOGENOM" id="CLU_040469_3_2_11"/>
<dbReference type="Proteomes" id="UP000009159">
    <property type="component" value="Chromosome"/>
</dbReference>
<dbReference type="GO" id="GO:0005829">
    <property type="term" value="C:cytosol"/>
    <property type="evidence" value="ECO:0007669"/>
    <property type="project" value="TreeGrafter"/>
</dbReference>
<dbReference type="GO" id="GO:0005524">
    <property type="term" value="F:ATP binding"/>
    <property type="evidence" value="ECO:0007669"/>
    <property type="project" value="UniProtKB-UniRule"/>
</dbReference>
<dbReference type="GO" id="GO:0016887">
    <property type="term" value="F:ATP hydrolysis activity"/>
    <property type="evidence" value="ECO:0007669"/>
    <property type="project" value="InterPro"/>
</dbReference>
<dbReference type="GO" id="GO:0140664">
    <property type="term" value="F:ATP-dependent DNA damage sensor activity"/>
    <property type="evidence" value="ECO:0007669"/>
    <property type="project" value="InterPro"/>
</dbReference>
<dbReference type="GO" id="GO:0003684">
    <property type="term" value="F:damaged DNA binding"/>
    <property type="evidence" value="ECO:0007669"/>
    <property type="project" value="UniProtKB-UniRule"/>
</dbReference>
<dbReference type="GO" id="GO:0003697">
    <property type="term" value="F:single-stranded DNA binding"/>
    <property type="evidence" value="ECO:0007669"/>
    <property type="project" value="UniProtKB-UniRule"/>
</dbReference>
<dbReference type="GO" id="GO:0006310">
    <property type="term" value="P:DNA recombination"/>
    <property type="evidence" value="ECO:0007669"/>
    <property type="project" value="UniProtKB-UniRule"/>
</dbReference>
<dbReference type="GO" id="GO:0006281">
    <property type="term" value="P:DNA repair"/>
    <property type="evidence" value="ECO:0007669"/>
    <property type="project" value="UniProtKB-UniRule"/>
</dbReference>
<dbReference type="GO" id="GO:0009432">
    <property type="term" value="P:SOS response"/>
    <property type="evidence" value="ECO:0007669"/>
    <property type="project" value="UniProtKB-UniRule"/>
</dbReference>
<dbReference type="CDD" id="cd00983">
    <property type="entry name" value="RecA"/>
    <property type="match status" value="1"/>
</dbReference>
<dbReference type="FunFam" id="3.40.50.300:FF:002436">
    <property type="entry name" value="Protein RecA"/>
    <property type="match status" value="1"/>
</dbReference>
<dbReference type="Gene3D" id="3.40.50.300">
    <property type="entry name" value="P-loop containing nucleotide triphosphate hydrolases"/>
    <property type="match status" value="1"/>
</dbReference>
<dbReference type="HAMAP" id="MF_00268">
    <property type="entry name" value="RecA"/>
    <property type="match status" value="1"/>
</dbReference>
<dbReference type="InterPro" id="IPR003593">
    <property type="entry name" value="AAA+_ATPase"/>
</dbReference>
<dbReference type="InterPro" id="IPR013765">
    <property type="entry name" value="DNA_recomb/repair_RecA"/>
</dbReference>
<dbReference type="InterPro" id="IPR020584">
    <property type="entry name" value="DNA_recomb/repair_RecA_CS"/>
</dbReference>
<dbReference type="InterPro" id="IPR027417">
    <property type="entry name" value="P-loop_NTPase"/>
</dbReference>
<dbReference type="InterPro" id="IPR049261">
    <property type="entry name" value="RecA-like_C"/>
</dbReference>
<dbReference type="InterPro" id="IPR049428">
    <property type="entry name" value="RecA-like_N"/>
</dbReference>
<dbReference type="InterPro" id="IPR020588">
    <property type="entry name" value="RecA_ATP-bd"/>
</dbReference>
<dbReference type="InterPro" id="IPR023400">
    <property type="entry name" value="RecA_C_sf"/>
</dbReference>
<dbReference type="InterPro" id="IPR020587">
    <property type="entry name" value="RecA_monomer-monomer_interface"/>
</dbReference>
<dbReference type="NCBIfam" id="TIGR02012">
    <property type="entry name" value="tigrfam_recA"/>
    <property type="match status" value="1"/>
</dbReference>
<dbReference type="PANTHER" id="PTHR45900:SF1">
    <property type="entry name" value="MITOCHONDRIAL DNA REPAIR PROTEIN RECA HOMOLOG-RELATED"/>
    <property type="match status" value="1"/>
</dbReference>
<dbReference type="PANTHER" id="PTHR45900">
    <property type="entry name" value="RECA"/>
    <property type="match status" value="1"/>
</dbReference>
<dbReference type="Pfam" id="PF00154">
    <property type="entry name" value="RecA"/>
    <property type="match status" value="1"/>
</dbReference>
<dbReference type="Pfam" id="PF21096">
    <property type="entry name" value="RecA_C"/>
    <property type="match status" value="1"/>
</dbReference>
<dbReference type="PRINTS" id="PR00142">
    <property type="entry name" value="RECA"/>
</dbReference>
<dbReference type="SMART" id="SM00382">
    <property type="entry name" value="AAA"/>
    <property type="match status" value="1"/>
</dbReference>
<dbReference type="SUPFAM" id="SSF52540">
    <property type="entry name" value="P-loop containing nucleoside triphosphate hydrolases"/>
    <property type="match status" value="1"/>
</dbReference>
<dbReference type="SUPFAM" id="SSF54752">
    <property type="entry name" value="RecA protein, C-terminal domain"/>
    <property type="match status" value="1"/>
</dbReference>
<dbReference type="PROSITE" id="PS00321">
    <property type="entry name" value="RECA_1"/>
    <property type="match status" value="1"/>
</dbReference>
<dbReference type="PROSITE" id="PS50162">
    <property type="entry name" value="RECA_2"/>
    <property type="match status" value="1"/>
</dbReference>
<dbReference type="PROSITE" id="PS50163">
    <property type="entry name" value="RECA_3"/>
    <property type="match status" value="1"/>
</dbReference>
<accession>A1T7T3</accession>
<comment type="function">
    <text evidence="1">Can catalyze the hydrolysis of ATP in the presence of single-stranded DNA, the ATP-dependent uptake of single-stranded DNA by duplex DNA, and the ATP-dependent hybridization of homologous single-stranded DNAs. It interacts with LexA causing its activation and leading to its autocatalytic cleavage.</text>
</comment>
<comment type="subcellular location">
    <subcellularLocation>
        <location evidence="1">Cytoplasm</location>
    </subcellularLocation>
</comment>
<comment type="similarity">
    <text evidence="1">Belongs to the RecA family.</text>
</comment>
<gene>
    <name evidence="1" type="primary">recA</name>
    <name type="ordered locus">Mvan_2420</name>
</gene>
<evidence type="ECO:0000255" key="1">
    <source>
        <dbReference type="HAMAP-Rule" id="MF_00268"/>
    </source>
</evidence>